<name>RF3_PROMH</name>
<reference key="1">
    <citation type="journal article" date="2008" name="J. Bacteriol.">
        <title>Complete genome sequence of uropathogenic Proteus mirabilis, a master of both adherence and motility.</title>
        <authorList>
            <person name="Pearson M.M."/>
            <person name="Sebaihia M."/>
            <person name="Churcher C."/>
            <person name="Quail M.A."/>
            <person name="Seshasayee A.S."/>
            <person name="Luscombe N.M."/>
            <person name="Abdellah Z."/>
            <person name="Arrosmith C."/>
            <person name="Atkin B."/>
            <person name="Chillingworth T."/>
            <person name="Hauser H."/>
            <person name="Jagels K."/>
            <person name="Moule S."/>
            <person name="Mungall K."/>
            <person name="Norbertczak H."/>
            <person name="Rabbinowitsch E."/>
            <person name="Walker D."/>
            <person name="Whithead S."/>
            <person name="Thomson N.R."/>
            <person name="Rather P.N."/>
            <person name="Parkhill J."/>
            <person name="Mobley H.L.T."/>
        </authorList>
    </citation>
    <scope>NUCLEOTIDE SEQUENCE [LARGE SCALE GENOMIC DNA]</scope>
    <source>
        <strain>HI4320</strain>
    </source>
</reference>
<gene>
    <name evidence="1" type="primary">prfC</name>
    <name type="ordered locus">PMI2422</name>
</gene>
<dbReference type="EMBL" id="AM942759">
    <property type="protein sequence ID" value="CAR44788.1"/>
    <property type="molecule type" value="Genomic_DNA"/>
</dbReference>
<dbReference type="RefSeq" id="WP_004249415.1">
    <property type="nucleotide sequence ID" value="NC_010554.1"/>
</dbReference>
<dbReference type="SMR" id="B4EWB0"/>
<dbReference type="EnsemblBacteria" id="CAR44788">
    <property type="protein sequence ID" value="CAR44788"/>
    <property type="gene ID" value="PMI2422"/>
</dbReference>
<dbReference type="GeneID" id="6801783"/>
<dbReference type="KEGG" id="pmr:PMI2422"/>
<dbReference type="eggNOG" id="COG4108">
    <property type="taxonomic scope" value="Bacteria"/>
</dbReference>
<dbReference type="HOGENOM" id="CLU_002794_2_1_6"/>
<dbReference type="Proteomes" id="UP000008319">
    <property type="component" value="Chromosome"/>
</dbReference>
<dbReference type="GO" id="GO:0005829">
    <property type="term" value="C:cytosol"/>
    <property type="evidence" value="ECO:0007669"/>
    <property type="project" value="TreeGrafter"/>
</dbReference>
<dbReference type="GO" id="GO:0005525">
    <property type="term" value="F:GTP binding"/>
    <property type="evidence" value="ECO:0007669"/>
    <property type="project" value="UniProtKB-UniRule"/>
</dbReference>
<dbReference type="GO" id="GO:0003924">
    <property type="term" value="F:GTPase activity"/>
    <property type="evidence" value="ECO:0007669"/>
    <property type="project" value="InterPro"/>
</dbReference>
<dbReference type="GO" id="GO:0097216">
    <property type="term" value="F:guanosine tetraphosphate binding"/>
    <property type="evidence" value="ECO:0007669"/>
    <property type="project" value="UniProtKB-ARBA"/>
</dbReference>
<dbReference type="GO" id="GO:0016150">
    <property type="term" value="F:translation release factor activity, codon nonspecific"/>
    <property type="evidence" value="ECO:0007669"/>
    <property type="project" value="TreeGrafter"/>
</dbReference>
<dbReference type="GO" id="GO:0016149">
    <property type="term" value="F:translation release factor activity, codon specific"/>
    <property type="evidence" value="ECO:0007669"/>
    <property type="project" value="UniProtKB-UniRule"/>
</dbReference>
<dbReference type="GO" id="GO:0006449">
    <property type="term" value="P:regulation of translational termination"/>
    <property type="evidence" value="ECO:0007669"/>
    <property type="project" value="UniProtKB-UniRule"/>
</dbReference>
<dbReference type="CDD" id="cd04169">
    <property type="entry name" value="RF3"/>
    <property type="match status" value="1"/>
</dbReference>
<dbReference type="CDD" id="cd03689">
    <property type="entry name" value="RF3_II"/>
    <property type="match status" value="1"/>
</dbReference>
<dbReference type="CDD" id="cd16259">
    <property type="entry name" value="RF3_III"/>
    <property type="match status" value="1"/>
</dbReference>
<dbReference type="FunFam" id="2.40.30.10:FF:000040">
    <property type="entry name" value="Peptide chain release factor 3"/>
    <property type="match status" value="1"/>
</dbReference>
<dbReference type="FunFam" id="3.30.70.3280:FF:000001">
    <property type="entry name" value="Peptide chain release factor 3"/>
    <property type="match status" value="1"/>
</dbReference>
<dbReference type="FunFam" id="3.40.50.300:FF:000184">
    <property type="entry name" value="Peptide chain release factor 3"/>
    <property type="match status" value="1"/>
</dbReference>
<dbReference type="FunFam" id="3.40.50.300:FF:000253">
    <property type="entry name" value="Peptide chain release factor 3"/>
    <property type="match status" value="1"/>
</dbReference>
<dbReference type="Gene3D" id="3.40.50.300">
    <property type="entry name" value="P-loop containing nucleotide triphosphate hydrolases"/>
    <property type="match status" value="3"/>
</dbReference>
<dbReference type="Gene3D" id="3.30.70.3280">
    <property type="entry name" value="Peptide chain release factor 3, domain III"/>
    <property type="match status" value="1"/>
</dbReference>
<dbReference type="HAMAP" id="MF_00072">
    <property type="entry name" value="Rel_fac_3"/>
    <property type="match status" value="1"/>
</dbReference>
<dbReference type="InterPro" id="IPR053905">
    <property type="entry name" value="EF-G-like_DII"/>
</dbReference>
<dbReference type="InterPro" id="IPR035647">
    <property type="entry name" value="EFG_III/V"/>
</dbReference>
<dbReference type="InterPro" id="IPR031157">
    <property type="entry name" value="G_TR_CS"/>
</dbReference>
<dbReference type="InterPro" id="IPR027417">
    <property type="entry name" value="P-loop_NTPase"/>
</dbReference>
<dbReference type="InterPro" id="IPR004548">
    <property type="entry name" value="PrfC"/>
</dbReference>
<dbReference type="InterPro" id="IPR032090">
    <property type="entry name" value="RF3_C"/>
</dbReference>
<dbReference type="InterPro" id="IPR038467">
    <property type="entry name" value="RF3_dom_3_sf"/>
</dbReference>
<dbReference type="InterPro" id="IPR041732">
    <property type="entry name" value="RF3_GTP-bd"/>
</dbReference>
<dbReference type="InterPro" id="IPR005225">
    <property type="entry name" value="Small_GTP-bd"/>
</dbReference>
<dbReference type="InterPro" id="IPR000795">
    <property type="entry name" value="T_Tr_GTP-bd_dom"/>
</dbReference>
<dbReference type="InterPro" id="IPR009000">
    <property type="entry name" value="Transl_B-barrel_sf"/>
</dbReference>
<dbReference type="NCBIfam" id="TIGR00503">
    <property type="entry name" value="prfC"/>
    <property type="match status" value="1"/>
</dbReference>
<dbReference type="NCBIfam" id="NF001964">
    <property type="entry name" value="PRK00741.1"/>
    <property type="match status" value="1"/>
</dbReference>
<dbReference type="NCBIfam" id="TIGR00231">
    <property type="entry name" value="small_GTP"/>
    <property type="match status" value="1"/>
</dbReference>
<dbReference type="PANTHER" id="PTHR43556">
    <property type="entry name" value="PEPTIDE CHAIN RELEASE FACTOR RF3"/>
    <property type="match status" value="1"/>
</dbReference>
<dbReference type="PANTHER" id="PTHR43556:SF2">
    <property type="entry name" value="PEPTIDE CHAIN RELEASE FACTOR RF3"/>
    <property type="match status" value="1"/>
</dbReference>
<dbReference type="Pfam" id="PF22042">
    <property type="entry name" value="EF-G_D2"/>
    <property type="match status" value="1"/>
</dbReference>
<dbReference type="Pfam" id="PF00009">
    <property type="entry name" value="GTP_EFTU"/>
    <property type="match status" value="1"/>
</dbReference>
<dbReference type="Pfam" id="PF16658">
    <property type="entry name" value="RF3_C"/>
    <property type="match status" value="1"/>
</dbReference>
<dbReference type="PRINTS" id="PR00315">
    <property type="entry name" value="ELONGATNFCT"/>
</dbReference>
<dbReference type="SUPFAM" id="SSF54980">
    <property type="entry name" value="EF-G C-terminal domain-like"/>
    <property type="match status" value="1"/>
</dbReference>
<dbReference type="SUPFAM" id="SSF52540">
    <property type="entry name" value="P-loop containing nucleoside triphosphate hydrolases"/>
    <property type="match status" value="1"/>
</dbReference>
<dbReference type="SUPFAM" id="SSF50447">
    <property type="entry name" value="Translation proteins"/>
    <property type="match status" value="1"/>
</dbReference>
<dbReference type="PROSITE" id="PS00301">
    <property type="entry name" value="G_TR_1"/>
    <property type="match status" value="1"/>
</dbReference>
<dbReference type="PROSITE" id="PS51722">
    <property type="entry name" value="G_TR_2"/>
    <property type="match status" value="1"/>
</dbReference>
<organism>
    <name type="scientific">Proteus mirabilis (strain HI4320)</name>
    <dbReference type="NCBI Taxonomy" id="529507"/>
    <lineage>
        <taxon>Bacteria</taxon>
        <taxon>Pseudomonadati</taxon>
        <taxon>Pseudomonadota</taxon>
        <taxon>Gammaproteobacteria</taxon>
        <taxon>Enterobacterales</taxon>
        <taxon>Morganellaceae</taxon>
        <taxon>Proteus</taxon>
    </lineage>
</organism>
<protein>
    <recommendedName>
        <fullName evidence="1">Peptide chain release factor 3</fullName>
        <shortName evidence="1">RF-3</shortName>
    </recommendedName>
</protein>
<keyword id="KW-0963">Cytoplasm</keyword>
<keyword id="KW-0342">GTP-binding</keyword>
<keyword id="KW-0547">Nucleotide-binding</keyword>
<keyword id="KW-0648">Protein biosynthesis</keyword>
<keyword id="KW-1185">Reference proteome</keyword>
<comment type="function">
    <text evidence="1">Increases the formation of ribosomal termination complexes and stimulates activities of RF-1 and RF-2. It binds guanine nucleotides and has strong preference for UGA stop codons. It may interact directly with the ribosome. The stimulation of RF-1 and RF-2 is significantly reduced by GTP and GDP, but not by GMP.</text>
</comment>
<comment type="subcellular location">
    <subcellularLocation>
        <location evidence="1">Cytoplasm</location>
    </subcellularLocation>
</comment>
<comment type="similarity">
    <text evidence="1">Belongs to the TRAFAC class translation factor GTPase superfamily. Classic translation factor GTPase family. PrfC subfamily.</text>
</comment>
<sequence length="529" mass="59827">MANQDFLNEINKRRTFAIISHPDAGKTTITEKVLLFGQAIQRAGTVKGRGSNQHAKSDWMEMEKQRGISITTSVMQFPYADCLVNLLDTPGHEDFSEDTYRTLTAVDCCLMVIDSSKGVEDRTRKLMEVTRLRDTPILTFMNKLDRDIRDPMELMDEVETELKIACSPVTWPIGCGKLFKGVYHILRDETYLYQTGQGHTIQNSRVIKGLDNPELDEAIGDDLAVQLRDELELVLGASHEFDHEAFLAGELTPVFFGTALGNFGVNHMLDGLVKWAPAPMPRQTDMREVTAAEETFTGFVFKIQANMDPKHRDRVAFLRVVSGMYDKGMKLHQVRTKKDVVISDALTFMAGDRSHVEHAYPGDIIGLHNHGTIQIGDTFTQGEMLKFTGIPNFAPELFRRIRLRDPLKQKQLLKGLVQLSEEGAVQVFRPLANNDLIVGAVGVLQFDVVVARLKGEYNVEAIYESVNVSTARWVECSNEKKLEEFKRKNEQHLALDGGDNLTYIAPTMVNLNLTRERYPDIEFHQTREH</sequence>
<feature type="chain" id="PRO_1000092491" description="Peptide chain release factor 3">
    <location>
        <begin position="1"/>
        <end position="529"/>
    </location>
</feature>
<feature type="domain" description="tr-type G">
    <location>
        <begin position="11"/>
        <end position="280"/>
    </location>
</feature>
<feature type="binding site" evidence="1">
    <location>
        <begin position="20"/>
        <end position="27"/>
    </location>
    <ligand>
        <name>GTP</name>
        <dbReference type="ChEBI" id="CHEBI:37565"/>
    </ligand>
</feature>
<feature type="binding site" evidence="1">
    <location>
        <begin position="88"/>
        <end position="92"/>
    </location>
    <ligand>
        <name>GTP</name>
        <dbReference type="ChEBI" id="CHEBI:37565"/>
    </ligand>
</feature>
<feature type="binding site" evidence="1">
    <location>
        <begin position="142"/>
        <end position="145"/>
    </location>
    <ligand>
        <name>GTP</name>
        <dbReference type="ChEBI" id="CHEBI:37565"/>
    </ligand>
</feature>
<accession>B4EWB0</accession>
<proteinExistence type="inferred from homology"/>
<evidence type="ECO:0000255" key="1">
    <source>
        <dbReference type="HAMAP-Rule" id="MF_00072"/>
    </source>
</evidence>